<keyword id="KW-0408">Iron</keyword>
<keyword id="KW-0464">Manganese</keyword>
<keyword id="KW-0479">Metal-binding</keyword>
<keyword id="KW-0560">Oxidoreductase</keyword>
<keyword id="KW-1185">Reference proteome</keyword>
<name>RIR2H_MYCS2</name>
<evidence type="ECO:0000250" key="1">
    <source>
        <dbReference type="UniProtKB" id="P9WH69"/>
    </source>
</evidence>
<evidence type="ECO:0000305" key="2"/>
<accession>A0QPD3</accession>
<accession>I7FW62</accession>
<gene>
    <name type="primary">nrdB</name>
    <name type="ordered locus">MSMEG_0358</name>
    <name type="ordered locus">MSMEI_0351</name>
</gene>
<proteinExistence type="inferred from homology"/>
<organism>
    <name type="scientific">Mycolicibacterium smegmatis (strain ATCC 700084 / mc(2)155)</name>
    <name type="common">Mycobacterium smegmatis</name>
    <dbReference type="NCBI Taxonomy" id="246196"/>
    <lineage>
        <taxon>Bacteria</taxon>
        <taxon>Bacillati</taxon>
        <taxon>Actinomycetota</taxon>
        <taxon>Actinomycetes</taxon>
        <taxon>Mycobacteriales</taxon>
        <taxon>Mycobacteriaceae</taxon>
        <taxon>Mycolicibacterium</taxon>
    </lineage>
</organism>
<feature type="chain" id="PRO_0000375428" description="R2-like ligand binding oxidase">
    <location>
        <begin position="1"/>
        <end position="320"/>
    </location>
</feature>
<feature type="binding site" evidence="1">
    <location>
        <position position="68"/>
    </location>
    <ligand>
        <name>Mn(2+)</name>
        <dbReference type="ChEBI" id="CHEBI:29035"/>
    </ligand>
</feature>
<feature type="binding site" evidence="1">
    <location>
        <position position="101"/>
    </location>
    <ligand>
        <name>Fe cation</name>
        <dbReference type="ChEBI" id="CHEBI:24875"/>
    </ligand>
</feature>
<feature type="binding site" evidence="1">
    <location>
        <position position="101"/>
    </location>
    <ligand>
        <name>Mn(2+)</name>
        <dbReference type="ChEBI" id="CHEBI:29035"/>
    </ligand>
</feature>
<feature type="binding site" evidence="1">
    <location>
        <position position="104"/>
    </location>
    <ligand>
        <name>Mn(2+)</name>
        <dbReference type="ChEBI" id="CHEBI:29035"/>
    </ligand>
</feature>
<feature type="binding site" evidence="1">
    <location>
        <position position="167"/>
    </location>
    <ligand>
        <name>Fe cation</name>
        <dbReference type="ChEBI" id="CHEBI:24875"/>
    </ligand>
</feature>
<feature type="binding site" evidence="1">
    <location>
        <position position="202"/>
    </location>
    <ligand>
        <name>Fe cation</name>
        <dbReference type="ChEBI" id="CHEBI:24875"/>
    </ligand>
</feature>
<feature type="binding site" evidence="1">
    <location>
        <position position="205"/>
    </location>
    <ligand>
        <name>Fe cation</name>
        <dbReference type="ChEBI" id="CHEBI:24875"/>
    </ligand>
</feature>
<feature type="cross-link" description="3-(O4'-tyrosyl)-valine (Val-Tyr)" evidence="1">
    <location>
        <begin position="71"/>
        <end position="162"/>
    </location>
</feature>
<protein>
    <recommendedName>
        <fullName evidence="1">R2-like ligand binding oxidase</fullName>
        <ecNumber evidence="1">1.-.-.-</ecNumber>
    </recommendedName>
    <alternativeName>
        <fullName>Ribonucleotide reductase R2 subunit homolog</fullName>
    </alternativeName>
    <alternativeName>
        <fullName>Ribonucleotide reductase small subunit homolog</fullName>
    </alternativeName>
</protein>
<comment type="function">
    <text evidence="1">Probable oxidase that might be involved in lipid metabolism.</text>
</comment>
<comment type="cofactor">
    <cofactor evidence="1">
        <name>Fe cation</name>
        <dbReference type="ChEBI" id="CHEBI:24875"/>
    </cofactor>
    <text evidence="1">Binds 1 Fe cation per subunit.</text>
</comment>
<comment type="cofactor">
    <cofactor evidence="1">
        <name>Mn(2+)</name>
        <dbReference type="ChEBI" id="CHEBI:29035"/>
    </cofactor>
    <text evidence="1">Binds 1 manganese ion per subunit. The iron and manganese ions form a dinuclear manganese-iron cluster.</text>
</comment>
<comment type="subunit">
    <text evidence="1">Homodimer.</text>
</comment>
<comment type="similarity">
    <text evidence="2">Belongs to the ribonucleoside diphosphate reductase small chain family. R2-like ligand binding oxidase subfamily.</text>
</comment>
<sequence>MTRTHFDSIRAGGLNWSSLPLKLFAGGNAKFWDPADIDFSRDRADWEALTEREREYATRLCAEFIAGEEAVTKDIQPFMSAMRAEGRLGDEMYLTQFAFEEAKHTQVFRMWLDAVGVTDDLHSLIEEVPAYVQIFCEELPAALEALTSDPSPAAQVRASVVYNHVVEGMLALTGYYAWHRICVDRGILPGMQELVRRIGDDERRHMAWGTFTCRRHVAADDANWAVFETHMNELIPVALRLTQEGFALYGDDIPFGLEEGEFLQYSSDRGMRRFGTISSARGRPLAEIDVDYTPLQLEDTFADEDERALTAVKAAAAAAN</sequence>
<dbReference type="EC" id="1.-.-.-" evidence="1"/>
<dbReference type="EMBL" id="CP000480">
    <property type="protein sequence ID" value="ABK72528.1"/>
    <property type="molecule type" value="Genomic_DNA"/>
</dbReference>
<dbReference type="EMBL" id="CP001663">
    <property type="protein sequence ID" value="AFP36832.1"/>
    <property type="molecule type" value="Genomic_DNA"/>
</dbReference>
<dbReference type="RefSeq" id="WP_003891679.1">
    <property type="nucleotide sequence ID" value="NZ_SIJM01000018.1"/>
</dbReference>
<dbReference type="RefSeq" id="YP_884771.1">
    <property type="nucleotide sequence ID" value="NC_008596.1"/>
</dbReference>
<dbReference type="SMR" id="A0QPD3"/>
<dbReference type="STRING" id="246196.MSMEG_0358"/>
<dbReference type="PaxDb" id="246196-MSMEI_0351"/>
<dbReference type="KEGG" id="msb:LJ00_01790"/>
<dbReference type="KEGG" id="msg:MSMEI_0351"/>
<dbReference type="KEGG" id="msm:MSMEG_0358"/>
<dbReference type="PATRIC" id="fig|246196.19.peg.355"/>
<dbReference type="eggNOG" id="COG0208">
    <property type="taxonomic scope" value="Bacteria"/>
</dbReference>
<dbReference type="OrthoDB" id="5489780at2"/>
<dbReference type="Proteomes" id="UP000000757">
    <property type="component" value="Chromosome"/>
</dbReference>
<dbReference type="Proteomes" id="UP000006158">
    <property type="component" value="Chromosome"/>
</dbReference>
<dbReference type="GO" id="GO:0046872">
    <property type="term" value="F:metal ion binding"/>
    <property type="evidence" value="ECO:0007669"/>
    <property type="project" value="UniProtKB-KW"/>
</dbReference>
<dbReference type="GO" id="GO:0016491">
    <property type="term" value="F:oxidoreductase activity"/>
    <property type="evidence" value="ECO:0007669"/>
    <property type="project" value="UniProtKB-KW"/>
</dbReference>
<dbReference type="GO" id="GO:0009263">
    <property type="term" value="P:deoxyribonucleotide biosynthetic process"/>
    <property type="evidence" value="ECO:0007669"/>
    <property type="project" value="InterPro"/>
</dbReference>
<dbReference type="CDD" id="cd07911">
    <property type="entry name" value="RNRR2_Rv0233_like"/>
    <property type="match status" value="1"/>
</dbReference>
<dbReference type="Gene3D" id="1.10.620.20">
    <property type="entry name" value="Ribonucleotide Reductase, subunit A"/>
    <property type="match status" value="1"/>
</dbReference>
<dbReference type="InterPro" id="IPR009078">
    <property type="entry name" value="Ferritin-like_SF"/>
</dbReference>
<dbReference type="InterPro" id="IPR033908">
    <property type="entry name" value="R2LOX"/>
</dbReference>
<dbReference type="InterPro" id="IPR012348">
    <property type="entry name" value="RNR-like"/>
</dbReference>
<dbReference type="InterPro" id="IPR000358">
    <property type="entry name" value="RNR_small_fam"/>
</dbReference>
<dbReference type="NCBIfam" id="NF006199">
    <property type="entry name" value="PRK08326.1-2"/>
    <property type="match status" value="1"/>
</dbReference>
<dbReference type="NCBIfam" id="NF006200">
    <property type="entry name" value="PRK08326.1-3"/>
    <property type="match status" value="1"/>
</dbReference>
<dbReference type="NCBIfam" id="NF006201">
    <property type="entry name" value="PRK08326.1-4"/>
    <property type="match status" value="1"/>
</dbReference>
<dbReference type="Pfam" id="PF00268">
    <property type="entry name" value="Ribonuc_red_sm"/>
    <property type="match status" value="1"/>
</dbReference>
<dbReference type="SUPFAM" id="SSF47240">
    <property type="entry name" value="Ferritin-like"/>
    <property type="match status" value="1"/>
</dbReference>
<reference key="1">
    <citation type="submission" date="2006-10" db="EMBL/GenBank/DDBJ databases">
        <authorList>
            <person name="Fleischmann R.D."/>
            <person name="Dodson R.J."/>
            <person name="Haft D.H."/>
            <person name="Merkel J.S."/>
            <person name="Nelson W.C."/>
            <person name="Fraser C.M."/>
        </authorList>
    </citation>
    <scope>NUCLEOTIDE SEQUENCE [LARGE SCALE GENOMIC DNA]</scope>
    <source>
        <strain>ATCC 700084 / mc(2)155</strain>
    </source>
</reference>
<reference key="2">
    <citation type="journal article" date="2007" name="Genome Biol.">
        <title>Interrupted coding sequences in Mycobacterium smegmatis: authentic mutations or sequencing errors?</title>
        <authorList>
            <person name="Deshayes C."/>
            <person name="Perrodou E."/>
            <person name="Gallien S."/>
            <person name="Euphrasie D."/>
            <person name="Schaeffer C."/>
            <person name="Van-Dorsselaer A."/>
            <person name="Poch O."/>
            <person name="Lecompte O."/>
            <person name="Reyrat J.-M."/>
        </authorList>
    </citation>
    <scope>NUCLEOTIDE SEQUENCE [LARGE SCALE GENOMIC DNA]</scope>
    <source>
        <strain>ATCC 700084 / mc(2)155</strain>
    </source>
</reference>
<reference key="3">
    <citation type="journal article" date="2009" name="Genome Res.">
        <title>Ortho-proteogenomics: multiple proteomes investigation through orthology and a new MS-based protocol.</title>
        <authorList>
            <person name="Gallien S."/>
            <person name="Perrodou E."/>
            <person name="Carapito C."/>
            <person name="Deshayes C."/>
            <person name="Reyrat J.-M."/>
            <person name="Van Dorsselaer A."/>
            <person name="Poch O."/>
            <person name="Schaeffer C."/>
            <person name="Lecompte O."/>
        </authorList>
    </citation>
    <scope>NUCLEOTIDE SEQUENCE [LARGE SCALE GENOMIC DNA]</scope>
    <source>
        <strain>ATCC 700084 / mc(2)155</strain>
    </source>
</reference>